<evidence type="ECO:0000269" key="1">
    <source>
    </source>
</evidence>
<evidence type="ECO:0000305" key="2"/>
<evidence type="ECO:0000305" key="3">
    <source>
    </source>
</evidence>
<dbReference type="GO" id="GO:0005576">
    <property type="term" value="C:extracellular region"/>
    <property type="evidence" value="ECO:0007669"/>
    <property type="project" value="UniProtKB-SubCell"/>
</dbReference>
<dbReference type="GO" id="GO:0090729">
    <property type="term" value="F:toxin activity"/>
    <property type="evidence" value="ECO:0007669"/>
    <property type="project" value="UniProtKB-KW"/>
</dbReference>
<sequence>QTCCGSKVFCC</sequence>
<reference key="1">
    <citation type="journal article" date="2012" name="J. Proteome Res.">
        <title>Constrained de novo sequencing of conotoxins.</title>
        <authorList>
            <person name="Bhatia S."/>
            <person name="Kil Y.J."/>
            <person name="Ueberheide B."/>
            <person name="Chait B.T."/>
            <person name="Tayo L."/>
            <person name="Cruz L."/>
            <person name="Lu B."/>
            <person name="Yates J.R. III"/>
            <person name="Bern M."/>
        </authorList>
    </citation>
    <scope>PROTEIN SEQUENCE</scope>
    <scope>IDENTIFICATION BY MASS SPECTROMETRY</scope>
    <scope>SUBCELLULAR LOCATION</scope>
    <scope>AMIDATION AT CYS-11</scope>
    <source>
        <tissue>Venom</tissue>
    </source>
</reference>
<protein>
    <recommendedName>
        <fullName evidence="2">Conotoxin tx5g</fullName>
    </recommendedName>
    <alternativeName>
        <fullName evidence="2">Conotoxin Tx5.3</fullName>
    </alternativeName>
</protein>
<proteinExistence type="evidence at protein level"/>
<organism>
    <name type="scientific">Conus textile</name>
    <name type="common">Cloth-of-gold cone</name>
    <dbReference type="NCBI Taxonomy" id="6494"/>
    <lineage>
        <taxon>Eukaryota</taxon>
        <taxon>Metazoa</taxon>
        <taxon>Spiralia</taxon>
        <taxon>Lophotrochozoa</taxon>
        <taxon>Mollusca</taxon>
        <taxon>Gastropoda</taxon>
        <taxon>Caenogastropoda</taxon>
        <taxon>Neogastropoda</taxon>
        <taxon>Conoidea</taxon>
        <taxon>Conidae</taxon>
        <taxon>Conus</taxon>
        <taxon>Cylinder</taxon>
    </lineage>
</organism>
<accession>P0DPL5</accession>
<feature type="peptide" id="PRO_0000445051" description="Conotoxin tx5g" evidence="1">
    <location>
        <begin position="1"/>
        <end position="11"/>
    </location>
</feature>
<feature type="modified residue" description="Cysteine amide" evidence="1">
    <location>
        <position position="11"/>
    </location>
</feature>
<name>CT5G_CONTE</name>
<keyword id="KW-0027">Amidation</keyword>
<keyword id="KW-0903">Direct protein sequencing</keyword>
<keyword id="KW-1015">Disulfide bond</keyword>
<keyword id="KW-0964">Secreted</keyword>
<keyword id="KW-0800">Toxin</keyword>
<comment type="subcellular location">
    <subcellularLocation>
        <location evidence="1">Secreted</location>
    </subcellularLocation>
</comment>
<comment type="tissue specificity">
    <text evidence="3">Expressed by the venom duct.</text>
</comment>
<comment type="domain">
    <text evidence="2">The cysteine framework is V (CC-CC).</text>
</comment>
<comment type="PTM">
    <text evidence="2">Contains 2 disulfide bonds that can be either 'C1-C3, C2-C4' or 'C1-C4, C2-C3', since these disulfide connectivities have been observed for conotoxins with cysteine framework V (for examples, see AC P0DQQ7 and AC P81755).</text>
</comment>
<comment type="similarity">
    <text evidence="2">Belongs to the conotoxin T superfamily.</text>
</comment>